<name>DADA_YERPA</name>
<accession>Q1C7V0</accession>
<gene>
    <name evidence="1" type="primary">dadA</name>
    <name type="ordered locus">YPA_1505</name>
</gene>
<proteinExistence type="inferred from homology"/>
<dbReference type="EC" id="1.4.99.-" evidence="1"/>
<dbReference type="EMBL" id="CP000308">
    <property type="protein sequence ID" value="ABG13472.1"/>
    <property type="molecule type" value="Genomic_DNA"/>
</dbReference>
<dbReference type="RefSeq" id="WP_002211686.1">
    <property type="nucleotide sequence ID" value="NZ_CP009906.1"/>
</dbReference>
<dbReference type="SMR" id="Q1C7V0"/>
<dbReference type="KEGG" id="ypa:YPA_1505"/>
<dbReference type="UniPathway" id="UPA00043">
    <property type="reaction ID" value="UER00498"/>
</dbReference>
<dbReference type="Proteomes" id="UP000001971">
    <property type="component" value="Chromosome"/>
</dbReference>
<dbReference type="GO" id="GO:0005737">
    <property type="term" value="C:cytoplasm"/>
    <property type="evidence" value="ECO:0007669"/>
    <property type="project" value="TreeGrafter"/>
</dbReference>
<dbReference type="GO" id="GO:0005886">
    <property type="term" value="C:plasma membrane"/>
    <property type="evidence" value="ECO:0007669"/>
    <property type="project" value="TreeGrafter"/>
</dbReference>
<dbReference type="GO" id="GO:0008718">
    <property type="term" value="F:D-amino-acid dehydrogenase activity"/>
    <property type="evidence" value="ECO:0007669"/>
    <property type="project" value="UniProtKB-UniRule"/>
</dbReference>
<dbReference type="GO" id="GO:0055130">
    <property type="term" value="P:D-alanine catabolic process"/>
    <property type="evidence" value="ECO:0007669"/>
    <property type="project" value="UniProtKB-UniPathway"/>
</dbReference>
<dbReference type="FunFam" id="3.50.50.60:FF:000020">
    <property type="entry name" value="D-amino acid dehydrogenase"/>
    <property type="match status" value="1"/>
</dbReference>
<dbReference type="Gene3D" id="3.30.9.10">
    <property type="entry name" value="D-Amino Acid Oxidase, subunit A, domain 2"/>
    <property type="match status" value="1"/>
</dbReference>
<dbReference type="Gene3D" id="3.50.50.60">
    <property type="entry name" value="FAD/NAD(P)-binding domain"/>
    <property type="match status" value="2"/>
</dbReference>
<dbReference type="HAMAP" id="MF_01202">
    <property type="entry name" value="DadA"/>
    <property type="match status" value="1"/>
</dbReference>
<dbReference type="InterPro" id="IPR023080">
    <property type="entry name" value="DadA"/>
</dbReference>
<dbReference type="InterPro" id="IPR006076">
    <property type="entry name" value="FAD-dep_OxRdtase"/>
</dbReference>
<dbReference type="InterPro" id="IPR036188">
    <property type="entry name" value="FAD/NAD-bd_sf"/>
</dbReference>
<dbReference type="NCBIfam" id="NF001933">
    <property type="entry name" value="PRK00711.1"/>
    <property type="match status" value="1"/>
</dbReference>
<dbReference type="PANTHER" id="PTHR13847:SF280">
    <property type="entry name" value="D-AMINO ACID DEHYDROGENASE"/>
    <property type="match status" value="1"/>
</dbReference>
<dbReference type="PANTHER" id="PTHR13847">
    <property type="entry name" value="SARCOSINE DEHYDROGENASE-RELATED"/>
    <property type="match status" value="1"/>
</dbReference>
<dbReference type="Pfam" id="PF01266">
    <property type="entry name" value="DAO"/>
    <property type="match status" value="1"/>
</dbReference>
<dbReference type="SUPFAM" id="SSF54373">
    <property type="entry name" value="FAD-linked reductases, C-terminal domain"/>
    <property type="match status" value="1"/>
</dbReference>
<dbReference type="SUPFAM" id="SSF51905">
    <property type="entry name" value="FAD/NAD(P)-binding domain"/>
    <property type="match status" value="1"/>
</dbReference>
<keyword id="KW-0274">FAD</keyword>
<keyword id="KW-0285">Flavoprotein</keyword>
<keyword id="KW-0560">Oxidoreductase</keyword>
<protein>
    <recommendedName>
        <fullName evidence="1">D-amino acid dehydrogenase</fullName>
        <ecNumber evidence="1">1.4.99.-</ecNumber>
    </recommendedName>
</protein>
<comment type="function">
    <text evidence="1">Oxidative deamination of D-amino acids.</text>
</comment>
<comment type="catalytic activity">
    <reaction evidence="1">
        <text>a D-alpha-amino acid + A + H2O = a 2-oxocarboxylate + AH2 + NH4(+)</text>
        <dbReference type="Rhea" id="RHEA:18125"/>
        <dbReference type="ChEBI" id="CHEBI:13193"/>
        <dbReference type="ChEBI" id="CHEBI:15377"/>
        <dbReference type="ChEBI" id="CHEBI:17499"/>
        <dbReference type="ChEBI" id="CHEBI:28938"/>
        <dbReference type="ChEBI" id="CHEBI:35179"/>
        <dbReference type="ChEBI" id="CHEBI:59871"/>
    </reaction>
</comment>
<comment type="cofactor">
    <cofactor evidence="1">
        <name>FAD</name>
        <dbReference type="ChEBI" id="CHEBI:57692"/>
    </cofactor>
</comment>
<comment type="pathway">
    <text>Amino-acid degradation; D-alanine degradation; NH(3) and pyruvate from D-alanine: step 1/1.</text>
</comment>
<comment type="similarity">
    <text evidence="1">Belongs to the DadA oxidoreductase family.</text>
</comment>
<sequence length="434" mass="47204">MRVVILGSGVVGVTSAWYLAKEGHDVTVIDRQDGPAQETSAGNAGQISPGYAAPWAAPGVPLKAIKWMFQRHAPLAIRLDGSSLQLRWMWQMLRNCDTSHYMVNKSRMVRLAEYSRDCLKDLRAATGIQYEGRQGGTLQLFRTEQQFDNAAKDIAVLDDAGVPYSLLTAEQLATVEPALAKVAHKLTGGLRLPNDETGDCKLFTERLAKMAEQAGVKFIFNRSVDKLLVEGDQIAGVLCGDDIIKADAYVVAFGAYSTALLAGLVSIPVYPLKGYSLTIPITDPASAPFSTVLDETYKIAITRFDDRIRVGGMAEIVGFNTQLAPARRETLEMVVRDLYPHGGDISQAVFWSGLRPMTPDGTPIVGRTPLKNLYLNTGHGTLGWTMACGSGQLLADIIQGRRPAIVADDLSVARYRAGFQPLNIAPLHDIHPIR</sequence>
<reference key="1">
    <citation type="journal article" date="2006" name="J. Bacteriol.">
        <title>Complete genome sequence of Yersinia pestis strains Antiqua and Nepal516: evidence of gene reduction in an emerging pathogen.</title>
        <authorList>
            <person name="Chain P.S.G."/>
            <person name="Hu P."/>
            <person name="Malfatti S.A."/>
            <person name="Radnedge L."/>
            <person name="Larimer F."/>
            <person name="Vergez L.M."/>
            <person name="Worsham P."/>
            <person name="Chu M.C."/>
            <person name="Andersen G.L."/>
        </authorList>
    </citation>
    <scope>NUCLEOTIDE SEQUENCE [LARGE SCALE GENOMIC DNA]</scope>
    <source>
        <strain>Antiqua</strain>
    </source>
</reference>
<organism>
    <name type="scientific">Yersinia pestis bv. Antiqua (strain Antiqua)</name>
    <dbReference type="NCBI Taxonomy" id="360102"/>
    <lineage>
        <taxon>Bacteria</taxon>
        <taxon>Pseudomonadati</taxon>
        <taxon>Pseudomonadota</taxon>
        <taxon>Gammaproteobacteria</taxon>
        <taxon>Enterobacterales</taxon>
        <taxon>Yersiniaceae</taxon>
        <taxon>Yersinia</taxon>
    </lineage>
</organism>
<feature type="chain" id="PRO_1000066126" description="D-amino acid dehydrogenase">
    <location>
        <begin position="1"/>
        <end position="434"/>
    </location>
</feature>
<feature type="binding site" evidence="1">
    <location>
        <begin position="3"/>
        <end position="17"/>
    </location>
    <ligand>
        <name>FAD</name>
        <dbReference type="ChEBI" id="CHEBI:57692"/>
    </ligand>
</feature>
<evidence type="ECO:0000255" key="1">
    <source>
        <dbReference type="HAMAP-Rule" id="MF_01202"/>
    </source>
</evidence>